<name>YBEY_AZOC5</name>
<evidence type="ECO:0000255" key="1">
    <source>
        <dbReference type="HAMAP-Rule" id="MF_00009"/>
    </source>
</evidence>
<keyword id="KW-0963">Cytoplasm</keyword>
<keyword id="KW-0255">Endonuclease</keyword>
<keyword id="KW-0378">Hydrolase</keyword>
<keyword id="KW-0479">Metal-binding</keyword>
<keyword id="KW-0540">Nuclease</keyword>
<keyword id="KW-1185">Reference proteome</keyword>
<keyword id="KW-0690">Ribosome biogenesis</keyword>
<keyword id="KW-0698">rRNA processing</keyword>
<keyword id="KW-0862">Zinc</keyword>
<accession>A8IG05</accession>
<feature type="chain" id="PRO_1000070930" description="Endoribonuclease YbeY">
    <location>
        <begin position="1"/>
        <end position="159"/>
    </location>
</feature>
<feature type="binding site" evidence="1">
    <location>
        <position position="117"/>
    </location>
    <ligand>
        <name>Zn(2+)</name>
        <dbReference type="ChEBI" id="CHEBI:29105"/>
        <note>catalytic</note>
    </ligand>
</feature>
<feature type="binding site" evidence="1">
    <location>
        <position position="121"/>
    </location>
    <ligand>
        <name>Zn(2+)</name>
        <dbReference type="ChEBI" id="CHEBI:29105"/>
        <note>catalytic</note>
    </ligand>
</feature>
<feature type="binding site" evidence="1">
    <location>
        <position position="127"/>
    </location>
    <ligand>
        <name>Zn(2+)</name>
        <dbReference type="ChEBI" id="CHEBI:29105"/>
        <note>catalytic</note>
    </ligand>
</feature>
<protein>
    <recommendedName>
        <fullName evidence="1">Endoribonuclease YbeY</fullName>
        <ecNumber evidence="1">3.1.-.-</ecNumber>
    </recommendedName>
</protein>
<proteinExistence type="inferred from homology"/>
<reference key="1">
    <citation type="submission" date="2007-04" db="EMBL/GenBank/DDBJ databases">
        <title>Complete genome sequence of the nitrogen-fixing bacterium Azorhizobium caulinodans ORS571.</title>
        <authorList>
            <person name="Lee K.B."/>
            <person name="Backer P.D."/>
            <person name="Aono T."/>
            <person name="Liu C.T."/>
            <person name="Suzuki S."/>
            <person name="Suzuki T."/>
            <person name="Kaneko T."/>
            <person name="Yamada M."/>
            <person name="Tabata S."/>
            <person name="Kupfer D.M."/>
            <person name="Najar F.Z."/>
            <person name="Wiley G.B."/>
            <person name="Roe B."/>
            <person name="Binnewies T."/>
            <person name="Ussery D."/>
            <person name="Vereecke D."/>
            <person name="Gevers D."/>
            <person name="Holsters M."/>
            <person name="Oyaizu H."/>
        </authorList>
    </citation>
    <scope>NUCLEOTIDE SEQUENCE [LARGE SCALE GENOMIC DNA]</scope>
    <source>
        <strain>ATCC 43989 / DSM 5975 / JCM 20966 / LMG 6465 / NBRC 14845 / NCIMB 13405 / ORS 571</strain>
    </source>
</reference>
<sequence>MEIDVLVEDDGWSALPDAAEIAIAAARAALASLGDEVPEGAEMSITLTDDARIRVLNREWRDKDKPTNVLSFPAAELPEGVVPQPLGDVIVARETVFSEALAEDKTPAHHLAHLVVHGTLHLMGFDHEDDDEAEEMEAAERQILAGLGIDDPYALPAEG</sequence>
<dbReference type="EC" id="3.1.-.-" evidence="1"/>
<dbReference type="EMBL" id="AP009384">
    <property type="protein sequence ID" value="BAF86008.1"/>
    <property type="molecule type" value="Genomic_DNA"/>
</dbReference>
<dbReference type="SMR" id="A8IG05"/>
<dbReference type="STRING" id="438753.AZC_0010"/>
<dbReference type="KEGG" id="azc:AZC_0010"/>
<dbReference type="eggNOG" id="COG0319">
    <property type="taxonomic scope" value="Bacteria"/>
</dbReference>
<dbReference type="HOGENOM" id="CLU_106710_0_0_5"/>
<dbReference type="Proteomes" id="UP000000270">
    <property type="component" value="Chromosome"/>
</dbReference>
<dbReference type="GO" id="GO:0005737">
    <property type="term" value="C:cytoplasm"/>
    <property type="evidence" value="ECO:0007669"/>
    <property type="project" value="UniProtKB-SubCell"/>
</dbReference>
<dbReference type="GO" id="GO:0004222">
    <property type="term" value="F:metalloendopeptidase activity"/>
    <property type="evidence" value="ECO:0007669"/>
    <property type="project" value="InterPro"/>
</dbReference>
<dbReference type="GO" id="GO:0004521">
    <property type="term" value="F:RNA endonuclease activity"/>
    <property type="evidence" value="ECO:0007669"/>
    <property type="project" value="UniProtKB-UniRule"/>
</dbReference>
<dbReference type="GO" id="GO:0008270">
    <property type="term" value="F:zinc ion binding"/>
    <property type="evidence" value="ECO:0007669"/>
    <property type="project" value="UniProtKB-UniRule"/>
</dbReference>
<dbReference type="GO" id="GO:0006364">
    <property type="term" value="P:rRNA processing"/>
    <property type="evidence" value="ECO:0007669"/>
    <property type="project" value="UniProtKB-UniRule"/>
</dbReference>
<dbReference type="Gene3D" id="3.40.390.30">
    <property type="entry name" value="Metalloproteases ('zincins'), catalytic domain"/>
    <property type="match status" value="1"/>
</dbReference>
<dbReference type="HAMAP" id="MF_00009">
    <property type="entry name" value="Endoribonucl_YbeY"/>
    <property type="match status" value="1"/>
</dbReference>
<dbReference type="InterPro" id="IPR023091">
    <property type="entry name" value="MetalPrtase_cat_dom_sf_prd"/>
</dbReference>
<dbReference type="InterPro" id="IPR002036">
    <property type="entry name" value="YbeY"/>
</dbReference>
<dbReference type="InterPro" id="IPR020549">
    <property type="entry name" value="YbeY_CS"/>
</dbReference>
<dbReference type="NCBIfam" id="TIGR00043">
    <property type="entry name" value="rRNA maturation RNase YbeY"/>
    <property type="match status" value="1"/>
</dbReference>
<dbReference type="PANTHER" id="PTHR46986">
    <property type="entry name" value="ENDORIBONUCLEASE YBEY, CHLOROPLASTIC"/>
    <property type="match status" value="1"/>
</dbReference>
<dbReference type="PANTHER" id="PTHR46986:SF1">
    <property type="entry name" value="ENDORIBONUCLEASE YBEY, CHLOROPLASTIC"/>
    <property type="match status" value="1"/>
</dbReference>
<dbReference type="Pfam" id="PF02130">
    <property type="entry name" value="YbeY"/>
    <property type="match status" value="1"/>
</dbReference>
<dbReference type="SUPFAM" id="SSF55486">
    <property type="entry name" value="Metalloproteases ('zincins'), catalytic domain"/>
    <property type="match status" value="1"/>
</dbReference>
<dbReference type="PROSITE" id="PS01306">
    <property type="entry name" value="UPF0054"/>
    <property type="match status" value="1"/>
</dbReference>
<organism>
    <name type="scientific">Azorhizobium caulinodans (strain ATCC 43989 / DSM 5975 / JCM 20966 / LMG 6465 / NBRC 14845 / NCIMB 13405 / ORS 571)</name>
    <dbReference type="NCBI Taxonomy" id="438753"/>
    <lineage>
        <taxon>Bacteria</taxon>
        <taxon>Pseudomonadati</taxon>
        <taxon>Pseudomonadota</taxon>
        <taxon>Alphaproteobacteria</taxon>
        <taxon>Hyphomicrobiales</taxon>
        <taxon>Xanthobacteraceae</taxon>
        <taxon>Azorhizobium</taxon>
    </lineage>
</organism>
<comment type="function">
    <text evidence="1">Single strand-specific metallo-endoribonuclease involved in late-stage 70S ribosome quality control and in maturation of the 3' terminus of the 16S rRNA.</text>
</comment>
<comment type="cofactor">
    <cofactor evidence="1">
        <name>Zn(2+)</name>
        <dbReference type="ChEBI" id="CHEBI:29105"/>
    </cofactor>
    <text evidence="1">Binds 1 zinc ion.</text>
</comment>
<comment type="subcellular location">
    <subcellularLocation>
        <location evidence="1">Cytoplasm</location>
    </subcellularLocation>
</comment>
<comment type="similarity">
    <text evidence="1">Belongs to the endoribonuclease YbeY family.</text>
</comment>
<gene>
    <name evidence="1" type="primary">ybeY</name>
    <name type="ordered locus">AZC_0010</name>
</gene>